<accession>A7X524</accession>
<dbReference type="EC" id="5.4.2.10" evidence="1"/>
<dbReference type="EMBL" id="AP009324">
    <property type="protein sequence ID" value="BAF79028.1"/>
    <property type="molecule type" value="Genomic_DNA"/>
</dbReference>
<dbReference type="RefSeq" id="WP_000521495.1">
    <property type="nucleotide sequence ID" value="NC_009782.1"/>
</dbReference>
<dbReference type="SMR" id="A7X524"/>
<dbReference type="KEGG" id="saw:SAHV_2145"/>
<dbReference type="HOGENOM" id="CLU_016950_7_0_9"/>
<dbReference type="GO" id="GO:0005829">
    <property type="term" value="C:cytosol"/>
    <property type="evidence" value="ECO:0007669"/>
    <property type="project" value="TreeGrafter"/>
</dbReference>
<dbReference type="GO" id="GO:0000287">
    <property type="term" value="F:magnesium ion binding"/>
    <property type="evidence" value="ECO:0007669"/>
    <property type="project" value="UniProtKB-UniRule"/>
</dbReference>
<dbReference type="GO" id="GO:0008966">
    <property type="term" value="F:phosphoglucosamine mutase activity"/>
    <property type="evidence" value="ECO:0007669"/>
    <property type="project" value="UniProtKB-UniRule"/>
</dbReference>
<dbReference type="GO" id="GO:0004615">
    <property type="term" value="F:phosphomannomutase activity"/>
    <property type="evidence" value="ECO:0007669"/>
    <property type="project" value="TreeGrafter"/>
</dbReference>
<dbReference type="GO" id="GO:0005975">
    <property type="term" value="P:carbohydrate metabolic process"/>
    <property type="evidence" value="ECO:0007669"/>
    <property type="project" value="InterPro"/>
</dbReference>
<dbReference type="GO" id="GO:0009252">
    <property type="term" value="P:peptidoglycan biosynthetic process"/>
    <property type="evidence" value="ECO:0007669"/>
    <property type="project" value="TreeGrafter"/>
</dbReference>
<dbReference type="GO" id="GO:0006048">
    <property type="term" value="P:UDP-N-acetylglucosamine biosynthetic process"/>
    <property type="evidence" value="ECO:0007669"/>
    <property type="project" value="TreeGrafter"/>
</dbReference>
<dbReference type="CDD" id="cd05802">
    <property type="entry name" value="GlmM"/>
    <property type="match status" value="1"/>
</dbReference>
<dbReference type="FunFam" id="3.30.310.50:FF:000001">
    <property type="entry name" value="Phosphoglucosamine mutase"/>
    <property type="match status" value="1"/>
</dbReference>
<dbReference type="FunFam" id="3.40.120.10:FF:000001">
    <property type="entry name" value="Phosphoglucosamine mutase"/>
    <property type="match status" value="1"/>
</dbReference>
<dbReference type="FunFam" id="3.40.120.10:FF:000002">
    <property type="entry name" value="Phosphoglucosamine mutase"/>
    <property type="match status" value="1"/>
</dbReference>
<dbReference type="Gene3D" id="3.40.120.10">
    <property type="entry name" value="Alpha-D-Glucose-1,6-Bisphosphate, subunit A, domain 3"/>
    <property type="match status" value="3"/>
</dbReference>
<dbReference type="Gene3D" id="3.30.310.50">
    <property type="entry name" value="Alpha-D-phosphohexomutase, C-terminal domain"/>
    <property type="match status" value="1"/>
</dbReference>
<dbReference type="HAMAP" id="MF_01554_B">
    <property type="entry name" value="GlmM_B"/>
    <property type="match status" value="1"/>
</dbReference>
<dbReference type="InterPro" id="IPR005844">
    <property type="entry name" value="A-D-PHexomutase_a/b/a-I"/>
</dbReference>
<dbReference type="InterPro" id="IPR016055">
    <property type="entry name" value="A-D-PHexomutase_a/b/a-I/II/III"/>
</dbReference>
<dbReference type="InterPro" id="IPR005845">
    <property type="entry name" value="A-D-PHexomutase_a/b/a-II"/>
</dbReference>
<dbReference type="InterPro" id="IPR005846">
    <property type="entry name" value="A-D-PHexomutase_a/b/a-III"/>
</dbReference>
<dbReference type="InterPro" id="IPR005843">
    <property type="entry name" value="A-D-PHexomutase_C"/>
</dbReference>
<dbReference type="InterPro" id="IPR036900">
    <property type="entry name" value="A-D-PHexomutase_C_sf"/>
</dbReference>
<dbReference type="InterPro" id="IPR016066">
    <property type="entry name" value="A-D-PHexomutase_CS"/>
</dbReference>
<dbReference type="InterPro" id="IPR005841">
    <property type="entry name" value="Alpha-D-phosphohexomutase_SF"/>
</dbReference>
<dbReference type="InterPro" id="IPR006352">
    <property type="entry name" value="GlmM_bact"/>
</dbReference>
<dbReference type="InterPro" id="IPR050060">
    <property type="entry name" value="Phosphoglucosamine_mutase"/>
</dbReference>
<dbReference type="NCBIfam" id="TIGR01455">
    <property type="entry name" value="glmM"/>
    <property type="match status" value="1"/>
</dbReference>
<dbReference type="NCBIfam" id="NF008139">
    <property type="entry name" value="PRK10887.1"/>
    <property type="match status" value="1"/>
</dbReference>
<dbReference type="PANTHER" id="PTHR42946:SF1">
    <property type="entry name" value="PHOSPHOGLUCOMUTASE (ALPHA-D-GLUCOSE-1,6-BISPHOSPHATE-DEPENDENT)"/>
    <property type="match status" value="1"/>
</dbReference>
<dbReference type="PANTHER" id="PTHR42946">
    <property type="entry name" value="PHOSPHOHEXOSE MUTASE"/>
    <property type="match status" value="1"/>
</dbReference>
<dbReference type="Pfam" id="PF02878">
    <property type="entry name" value="PGM_PMM_I"/>
    <property type="match status" value="1"/>
</dbReference>
<dbReference type="Pfam" id="PF02879">
    <property type="entry name" value="PGM_PMM_II"/>
    <property type="match status" value="1"/>
</dbReference>
<dbReference type="Pfam" id="PF02880">
    <property type="entry name" value="PGM_PMM_III"/>
    <property type="match status" value="1"/>
</dbReference>
<dbReference type="Pfam" id="PF00408">
    <property type="entry name" value="PGM_PMM_IV"/>
    <property type="match status" value="1"/>
</dbReference>
<dbReference type="PRINTS" id="PR00509">
    <property type="entry name" value="PGMPMM"/>
</dbReference>
<dbReference type="SUPFAM" id="SSF55957">
    <property type="entry name" value="Phosphoglucomutase, C-terminal domain"/>
    <property type="match status" value="1"/>
</dbReference>
<dbReference type="SUPFAM" id="SSF53738">
    <property type="entry name" value="Phosphoglucomutase, first 3 domains"/>
    <property type="match status" value="3"/>
</dbReference>
<dbReference type="PROSITE" id="PS00710">
    <property type="entry name" value="PGM_PMM"/>
    <property type="match status" value="1"/>
</dbReference>
<name>GLMM_STAA1</name>
<feature type="chain" id="PRO_1000068918" description="Phosphoglucosamine mutase">
    <location>
        <begin position="1"/>
        <end position="451"/>
    </location>
</feature>
<feature type="active site" description="Phosphoserine intermediate" evidence="1">
    <location>
        <position position="102"/>
    </location>
</feature>
<feature type="binding site" description="via phosphate group" evidence="1">
    <location>
        <position position="102"/>
    </location>
    <ligand>
        <name>Mg(2+)</name>
        <dbReference type="ChEBI" id="CHEBI:18420"/>
    </ligand>
</feature>
<feature type="binding site" evidence="1">
    <location>
        <position position="242"/>
    </location>
    <ligand>
        <name>Mg(2+)</name>
        <dbReference type="ChEBI" id="CHEBI:18420"/>
    </ligand>
</feature>
<feature type="binding site" evidence="1">
    <location>
        <position position="244"/>
    </location>
    <ligand>
        <name>Mg(2+)</name>
        <dbReference type="ChEBI" id="CHEBI:18420"/>
    </ligand>
</feature>
<feature type="binding site" evidence="1">
    <location>
        <position position="246"/>
    </location>
    <ligand>
        <name>Mg(2+)</name>
        <dbReference type="ChEBI" id="CHEBI:18420"/>
    </ligand>
</feature>
<feature type="modified residue" description="Phosphoserine" evidence="1">
    <location>
        <position position="102"/>
    </location>
</feature>
<evidence type="ECO:0000255" key="1">
    <source>
        <dbReference type="HAMAP-Rule" id="MF_01554"/>
    </source>
</evidence>
<comment type="function">
    <text evidence="1">Catalyzes the conversion of glucosamine-6-phosphate to glucosamine-1-phosphate.</text>
</comment>
<comment type="catalytic activity">
    <reaction evidence="1">
        <text>alpha-D-glucosamine 1-phosphate = D-glucosamine 6-phosphate</text>
        <dbReference type="Rhea" id="RHEA:23424"/>
        <dbReference type="ChEBI" id="CHEBI:58516"/>
        <dbReference type="ChEBI" id="CHEBI:58725"/>
        <dbReference type="EC" id="5.4.2.10"/>
    </reaction>
</comment>
<comment type="cofactor">
    <cofactor evidence="1">
        <name>Mg(2+)</name>
        <dbReference type="ChEBI" id="CHEBI:18420"/>
    </cofactor>
    <text evidence="1">Binds 1 Mg(2+) ion per subunit.</text>
</comment>
<comment type="PTM">
    <text evidence="1">Activated by phosphorylation.</text>
</comment>
<comment type="similarity">
    <text evidence="1">Belongs to the phosphohexose mutase family.</text>
</comment>
<gene>
    <name evidence="1" type="primary">glmM</name>
    <name type="ordered locus">SAHV_2145</name>
</gene>
<protein>
    <recommendedName>
        <fullName evidence="1">Phosphoglucosamine mutase</fullName>
        <ecNumber evidence="1">5.4.2.10</ecNumber>
    </recommendedName>
</protein>
<reference key="1">
    <citation type="journal article" date="2008" name="Antimicrob. Agents Chemother.">
        <title>Mutated response regulator graR is responsible for phenotypic conversion of Staphylococcus aureus from heterogeneous vancomycin-intermediate resistance to vancomycin-intermediate resistance.</title>
        <authorList>
            <person name="Neoh H.-M."/>
            <person name="Cui L."/>
            <person name="Yuzawa H."/>
            <person name="Takeuchi F."/>
            <person name="Matsuo M."/>
            <person name="Hiramatsu K."/>
        </authorList>
    </citation>
    <scope>NUCLEOTIDE SEQUENCE [LARGE SCALE GENOMIC DNA]</scope>
    <source>
        <strain>Mu3 / ATCC 700698</strain>
    </source>
</reference>
<organism>
    <name type="scientific">Staphylococcus aureus (strain Mu3 / ATCC 700698)</name>
    <dbReference type="NCBI Taxonomy" id="418127"/>
    <lineage>
        <taxon>Bacteria</taxon>
        <taxon>Bacillati</taxon>
        <taxon>Bacillota</taxon>
        <taxon>Bacilli</taxon>
        <taxon>Bacillales</taxon>
        <taxon>Staphylococcaceae</taxon>
        <taxon>Staphylococcus</taxon>
    </lineage>
</organism>
<proteinExistence type="inferred from homology"/>
<sequence length="451" mass="49294">MGKYFGTDGVRGVANQELTPELAFKLGRYGGYVLAHNKGEKHPRVLVGRDTRVSGEMLESALIAGLISIGAEVMRLGIISTPGVAYLTRDMGAELGVMISASHNPVADNGIKFFGSDGFKLSDEQENEIEALLDQENPELPRPVGNDIVHYSDYFEGAQKYLSYLKSTVDVNFEGLKIVLDGANGSTSSLAPFLFGDLEADTETIGCSPDGYNINEKCGSTHPEKLAEKVVETESDFGLAFDGDGDRIIAVDENGQIVDGDQIMFIIGQEMHKNQELNNDMIVSTVMSNLGFYKALEQEGIKSNKTKVGDRYVVEEMRRGNYNLGGEQSGHIVMMDYNTTGDGLLTGIQLASVIKMTGKSLSELAGQMKKYPQSLINVRVTDKYRVEENVDVKEVMTKVEVEMNGEGRILVRPSGTEPLVRVMVEAATDEDAERFAQQIADVVQDKMGLDK</sequence>
<keyword id="KW-0413">Isomerase</keyword>
<keyword id="KW-0460">Magnesium</keyword>
<keyword id="KW-0479">Metal-binding</keyword>
<keyword id="KW-0597">Phosphoprotein</keyword>